<geneLocation type="chloroplast"/>
<feature type="chain" id="PRO_0000391268" description="NAD(P)H-quinone oxidoreductase subunit 2 B, chloroplastic">
    <location>
        <begin position="1"/>
        <end position="510"/>
    </location>
</feature>
<feature type="transmembrane region" description="Helical" evidence="1">
    <location>
        <begin position="24"/>
        <end position="44"/>
    </location>
</feature>
<feature type="transmembrane region" description="Helical" evidence="1">
    <location>
        <begin position="57"/>
        <end position="77"/>
    </location>
</feature>
<feature type="transmembrane region" description="Helical" evidence="1">
    <location>
        <begin position="99"/>
        <end position="119"/>
    </location>
</feature>
<feature type="transmembrane region" description="Helical" evidence="1">
    <location>
        <begin position="124"/>
        <end position="144"/>
    </location>
</feature>
<feature type="transmembrane region" description="Helical" evidence="1">
    <location>
        <begin position="149"/>
        <end position="169"/>
    </location>
</feature>
<feature type="transmembrane region" description="Helical" evidence="1">
    <location>
        <begin position="183"/>
        <end position="203"/>
    </location>
</feature>
<feature type="transmembrane region" description="Helical" evidence="1">
    <location>
        <begin position="227"/>
        <end position="247"/>
    </location>
</feature>
<feature type="transmembrane region" description="Helical" evidence="1">
    <location>
        <begin position="295"/>
        <end position="315"/>
    </location>
</feature>
<feature type="transmembrane region" description="Helical" evidence="1">
    <location>
        <begin position="323"/>
        <end position="343"/>
    </location>
</feature>
<feature type="transmembrane region" description="Helical" evidence="1">
    <location>
        <begin position="354"/>
        <end position="374"/>
    </location>
</feature>
<feature type="transmembrane region" description="Helical" evidence="1">
    <location>
        <begin position="395"/>
        <end position="415"/>
    </location>
</feature>
<feature type="transmembrane region" description="Helical" evidence="1">
    <location>
        <begin position="428"/>
        <end position="448"/>
    </location>
</feature>
<feature type="transmembrane region" description="Helical" evidence="1">
    <location>
        <begin position="484"/>
        <end position="504"/>
    </location>
</feature>
<dbReference type="EC" id="7.1.1.-" evidence="1"/>
<dbReference type="EMBL" id="AY780259">
    <property type="protein sequence ID" value="AAX21071.1"/>
    <property type="molecule type" value="Genomic_DNA"/>
</dbReference>
<dbReference type="SMR" id="P0CC61"/>
<dbReference type="GO" id="GO:0009535">
    <property type="term" value="C:chloroplast thylakoid membrane"/>
    <property type="evidence" value="ECO:0007669"/>
    <property type="project" value="UniProtKB-SubCell"/>
</dbReference>
<dbReference type="GO" id="GO:0008137">
    <property type="term" value="F:NADH dehydrogenase (ubiquinone) activity"/>
    <property type="evidence" value="ECO:0007669"/>
    <property type="project" value="InterPro"/>
</dbReference>
<dbReference type="GO" id="GO:0048038">
    <property type="term" value="F:quinone binding"/>
    <property type="evidence" value="ECO:0007669"/>
    <property type="project" value="UniProtKB-KW"/>
</dbReference>
<dbReference type="GO" id="GO:0042773">
    <property type="term" value="P:ATP synthesis coupled electron transport"/>
    <property type="evidence" value="ECO:0007669"/>
    <property type="project" value="InterPro"/>
</dbReference>
<dbReference type="GO" id="GO:0019684">
    <property type="term" value="P:photosynthesis, light reaction"/>
    <property type="evidence" value="ECO:0007669"/>
    <property type="project" value="UniProtKB-UniRule"/>
</dbReference>
<dbReference type="HAMAP" id="MF_00445">
    <property type="entry name" value="NDH1_NuoN_1"/>
    <property type="match status" value="1"/>
</dbReference>
<dbReference type="InterPro" id="IPR010096">
    <property type="entry name" value="NADH-Q_OxRdtase_suN/2"/>
</dbReference>
<dbReference type="InterPro" id="IPR001750">
    <property type="entry name" value="ND/Mrp_TM"/>
</dbReference>
<dbReference type="InterPro" id="IPR045693">
    <property type="entry name" value="Ndh2_N"/>
</dbReference>
<dbReference type="NCBIfam" id="TIGR01770">
    <property type="entry name" value="NDH_I_N"/>
    <property type="match status" value="1"/>
</dbReference>
<dbReference type="NCBIfam" id="NF002701">
    <property type="entry name" value="PRK02504.1"/>
    <property type="match status" value="1"/>
</dbReference>
<dbReference type="PANTHER" id="PTHR22773">
    <property type="entry name" value="NADH DEHYDROGENASE"/>
    <property type="match status" value="1"/>
</dbReference>
<dbReference type="Pfam" id="PF19530">
    <property type="entry name" value="Ndh2_N"/>
    <property type="match status" value="1"/>
</dbReference>
<dbReference type="Pfam" id="PF00361">
    <property type="entry name" value="Proton_antipo_M"/>
    <property type="match status" value="1"/>
</dbReference>
<dbReference type="PRINTS" id="PR01434">
    <property type="entry name" value="NADHDHGNASE5"/>
</dbReference>
<comment type="function">
    <text evidence="1">NDH shuttles electrons from NAD(P)H:plastoquinone, via FMN and iron-sulfur (Fe-S) centers, to quinones in the photosynthetic chain and possibly in a chloroplast respiratory chain. The immediate electron acceptor for the enzyme in this species is believed to be plastoquinone. Couples the redox reaction to proton translocation, and thus conserves the redox energy in a proton gradient.</text>
</comment>
<comment type="catalytic activity">
    <reaction evidence="1">
        <text>a plastoquinone + NADH + (n+1) H(+)(in) = a plastoquinol + NAD(+) + n H(+)(out)</text>
        <dbReference type="Rhea" id="RHEA:42608"/>
        <dbReference type="Rhea" id="RHEA-COMP:9561"/>
        <dbReference type="Rhea" id="RHEA-COMP:9562"/>
        <dbReference type="ChEBI" id="CHEBI:15378"/>
        <dbReference type="ChEBI" id="CHEBI:17757"/>
        <dbReference type="ChEBI" id="CHEBI:57540"/>
        <dbReference type="ChEBI" id="CHEBI:57945"/>
        <dbReference type="ChEBI" id="CHEBI:62192"/>
    </reaction>
</comment>
<comment type="catalytic activity">
    <reaction evidence="1">
        <text>a plastoquinone + NADPH + (n+1) H(+)(in) = a plastoquinol + NADP(+) + n H(+)(out)</text>
        <dbReference type="Rhea" id="RHEA:42612"/>
        <dbReference type="Rhea" id="RHEA-COMP:9561"/>
        <dbReference type="Rhea" id="RHEA-COMP:9562"/>
        <dbReference type="ChEBI" id="CHEBI:15378"/>
        <dbReference type="ChEBI" id="CHEBI:17757"/>
        <dbReference type="ChEBI" id="CHEBI:57783"/>
        <dbReference type="ChEBI" id="CHEBI:58349"/>
        <dbReference type="ChEBI" id="CHEBI:62192"/>
    </reaction>
</comment>
<comment type="subunit">
    <text evidence="1">NDH is composed of at least 16 different subunits, 5 of which are encoded in the nucleus.</text>
</comment>
<comment type="subcellular location">
    <subcellularLocation>
        <location evidence="1">Plastid</location>
        <location evidence="1">Chloroplast thylakoid membrane</location>
        <topology evidence="1">Multi-pass membrane protein</topology>
    </subcellularLocation>
</comment>
<comment type="similarity">
    <text evidence="1">Belongs to the complex I subunit 2 family.</text>
</comment>
<gene>
    <name evidence="1" type="primary">ndhB2</name>
</gene>
<protein>
    <recommendedName>
        <fullName evidence="1">NAD(P)H-quinone oxidoreductase subunit 2 B, chloroplastic</fullName>
        <ecNumber evidence="1">7.1.1.-</ecNumber>
    </recommendedName>
    <alternativeName>
        <fullName evidence="1">NAD(P)H dehydrogenase, subunit 2 B</fullName>
    </alternativeName>
    <alternativeName>
        <fullName evidence="1">NADH-plastoquinone oxidoreductase subunit 2 B</fullName>
    </alternativeName>
</protein>
<proteinExistence type="inferred from homology"/>
<reference key="1">
    <citation type="journal article" date="2005" name="DNA Res.">
        <title>Complete nucleotide sequence of the chloroplast genome from the Tasmanian blue gum, Eucalyptus globulus (Myrtaceae).</title>
        <authorList>
            <person name="Steane D.A."/>
        </authorList>
    </citation>
    <scope>NUCLEOTIDE SEQUENCE [LARGE SCALE GENOMIC DNA]</scope>
</reference>
<sequence>MIWHVQNENLILDSTRIFMKAFHLLLFDGSFIFPECILIFGLILLLMIDSTSDQKDIPWFYFISSTSLVMSITALLFRWREEPMIIFSGNFQTNNFNEIFQFLILLCSTLCIPLSVEYIECTEMAITEFLLFVLTATLGGMFLCGANDLITIFVAPECFSLCSYLLSGYTKKDVRSNEATMKYLLMGGASSSILVHGFSWLYGSSGGEIELQEIVNGLINTQMYNSPGILIALLFITVGIGFKLSLAPSHQWTPDVYEGSPTPVVAFLSVTSKVAASASATRIFDIPFYFSSNEWHLLLEILAILSMILGNLIAITQTSMKRMLAYSSIGQIGYVIIGIIVGDSNGGYASMITYMLFYISMNLGTFACIVLFGLRTGTDNIRDYAGLYTKDPFLALSLALCLLSLGGLPPLAGFFGKLHLFWCGWQAGLYFLVSIGLLTSVISIYYYLKIIKLLMTGRNQEITPHVRNYRRSPLRSNNSIELSMIVCVIASTIPGISMNPIIAIAQDTLF</sequence>
<keyword id="KW-0150">Chloroplast</keyword>
<keyword id="KW-0472">Membrane</keyword>
<keyword id="KW-0520">NAD</keyword>
<keyword id="KW-0521">NADP</keyword>
<keyword id="KW-0934">Plastid</keyword>
<keyword id="KW-0618">Plastoquinone</keyword>
<keyword id="KW-0874">Quinone</keyword>
<keyword id="KW-0793">Thylakoid</keyword>
<keyword id="KW-1278">Translocase</keyword>
<keyword id="KW-0812">Transmembrane</keyword>
<keyword id="KW-1133">Transmembrane helix</keyword>
<keyword id="KW-0813">Transport</keyword>
<evidence type="ECO:0000255" key="1">
    <source>
        <dbReference type="HAMAP-Rule" id="MF_00445"/>
    </source>
</evidence>
<organism>
    <name type="scientific">Eucalyptus globulus subsp. globulus</name>
    <name type="common">Tasmanian blue gum</name>
    <dbReference type="NCBI Taxonomy" id="71271"/>
    <lineage>
        <taxon>Eukaryota</taxon>
        <taxon>Viridiplantae</taxon>
        <taxon>Streptophyta</taxon>
        <taxon>Embryophyta</taxon>
        <taxon>Tracheophyta</taxon>
        <taxon>Spermatophyta</taxon>
        <taxon>Magnoliopsida</taxon>
        <taxon>eudicotyledons</taxon>
        <taxon>Gunneridae</taxon>
        <taxon>Pentapetalae</taxon>
        <taxon>rosids</taxon>
        <taxon>malvids</taxon>
        <taxon>Myrtales</taxon>
        <taxon>Myrtaceae</taxon>
        <taxon>Myrtoideae</taxon>
        <taxon>Eucalypteae</taxon>
        <taxon>Eucalyptus</taxon>
    </lineage>
</organism>
<accession>P0CC61</accession>
<accession>Q49KT7</accession>
<name>NU2C2_EUCGG</name>